<feature type="chain" id="PRO_0000180502" description="DNA primase">
    <location>
        <begin position="1"/>
        <end position="620"/>
    </location>
</feature>
<feature type="domain" description="Toprim" evidence="1">
    <location>
        <begin position="266"/>
        <end position="350"/>
    </location>
</feature>
<feature type="zinc finger region" description="CHC2-type" evidence="1">
    <location>
        <begin position="38"/>
        <end position="62"/>
    </location>
</feature>
<feature type="binding site" evidence="1">
    <location>
        <position position="272"/>
    </location>
    <ligand>
        <name>Mg(2+)</name>
        <dbReference type="ChEBI" id="CHEBI:18420"/>
        <label>1</label>
        <note>catalytic</note>
    </ligand>
</feature>
<feature type="binding site" evidence="1">
    <location>
        <position position="319"/>
    </location>
    <ligand>
        <name>Mg(2+)</name>
        <dbReference type="ChEBI" id="CHEBI:18420"/>
        <label>1</label>
        <note>catalytic</note>
    </ligand>
</feature>
<feature type="binding site" evidence="1">
    <location>
        <position position="319"/>
    </location>
    <ligand>
        <name>Mg(2+)</name>
        <dbReference type="ChEBI" id="CHEBI:18420"/>
        <label>2</label>
    </ligand>
</feature>
<feature type="binding site" evidence="1">
    <location>
        <position position="321"/>
    </location>
    <ligand>
        <name>Mg(2+)</name>
        <dbReference type="ChEBI" id="CHEBI:18420"/>
        <label>2</label>
    </ligand>
</feature>
<evidence type="ECO:0000255" key="1">
    <source>
        <dbReference type="HAMAP-Rule" id="MF_00974"/>
    </source>
</evidence>
<keyword id="KW-0235">DNA replication</keyword>
<keyword id="KW-0238">DNA-binding</keyword>
<keyword id="KW-0240">DNA-directed RNA polymerase</keyword>
<keyword id="KW-0460">Magnesium</keyword>
<keyword id="KW-0479">Metal-binding</keyword>
<keyword id="KW-0548">Nucleotidyltransferase</keyword>
<keyword id="KW-0639">Primosome</keyword>
<keyword id="KW-1185">Reference proteome</keyword>
<keyword id="KW-0804">Transcription</keyword>
<keyword id="KW-0808">Transferase</keyword>
<keyword id="KW-0862">Zinc</keyword>
<keyword id="KW-0863">Zinc-finger</keyword>
<sequence length="620" mass="71537">MTSPTSLDQLKQQIKIAPIVEHYAIKLKKKGKDFVALCPFHADQNPSMTVSVAKNIFKCFSCQVGGDGIAFIQKIDQVDWKTALNKALSILNLDSQYAVNFYLKEVDPKLKRYWDLHSALVDYYQTRLKLEPKEQGLTYLTETRKLSPQVIERFQLGLAFTLEDQYFLPSLLNYPWISPAIEKAELCFATEKFPEALGFFNQQTHYATFKSRIMIPIHDLKGNPVGFSGRALQKTEKIKYKNSAEHQWFKKSELLFNFHRIDKNTLKLYLVEGYFDVFALTSAGIGDVVGLMGLALSESHIIAFQQQLKALETVVLALDNDTAGHDATFKLLQELNAHGIIVEVVDWNQAAYKDWDELFLAEGSDAVKAKTHRVLNLVEYLVAYFKTKGFDERITVNKVIDIIAQNQKVTADTSFSRFLCQKLQQLLQYSDVETLFTQLQQQKLKVKVNKTTTFTQRAPIYESVVGVVDNSFRNESQPVAITKEFLVENNWKETKERVFHAEIFAYVLLDKQFLVELKQSDLDELFASLQTPLFDVALFIDKARLYWAKVQEPDWAVFNSILGEQQAMFPTTFLAQIKEFFLNKSLSYDPEDYEEDLQFFRQLIVKQKELLKYFKSMVEH</sequence>
<name>DNAG_MYCPN</name>
<dbReference type="EC" id="2.7.7.101" evidence="1"/>
<dbReference type="EMBL" id="U00089">
    <property type="protein sequence ID" value="AAB96131.1"/>
    <property type="molecule type" value="Genomic_DNA"/>
</dbReference>
<dbReference type="PIR" id="S73809">
    <property type="entry name" value="S73809"/>
</dbReference>
<dbReference type="RefSeq" id="NP_110041.1">
    <property type="nucleotide sequence ID" value="NC_000912.1"/>
</dbReference>
<dbReference type="RefSeq" id="WP_010874709.1">
    <property type="nucleotide sequence ID" value="NZ_OU342337.1"/>
</dbReference>
<dbReference type="SMR" id="P75426"/>
<dbReference type="IntAct" id="P75426">
    <property type="interactions" value="5"/>
</dbReference>
<dbReference type="STRING" id="272634.MPN_353"/>
<dbReference type="EnsemblBacteria" id="AAB96131">
    <property type="protein sequence ID" value="AAB96131"/>
    <property type="gene ID" value="MPN_353"/>
</dbReference>
<dbReference type="KEGG" id="mpn:MPN_353"/>
<dbReference type="PATRIC" id="fig|272634.6.peg.380"/>
<dbReference type="HOGENOM" id="CLU_013501_3_3_14"/>
<dbReference type="OrthoDB" id="9803773at2"/>
<dbReference type="BioCyc" id="MPNE272634:G1GJ3-556-MONOMER"/>
<dbReference type="Proteomes" id="UP000000808">
    <property type="component" value="Chromosome"/>
</dbReference>
<dbReference type="GO" id="GO:0005737">
    <property type="term" value="C:cytoplasm"/>
    <property type="evidence" value="ECO:0007669"/>
    <property type="project" value="TreeGrafter"/>
</dbReference>
<dbReference type="GO" id="GO:0000428">
    <property type="term" value="C:DNA-directed RNA polymerase complex"/>
    <property type="evidence" value="ECO:0007669"/>
    <property type="project" value="UniProtKB-KW"/>
</dbReference>
<dbReference type="GO" id="GO:1990077">
    <property type="term" value="C:primosome complex"/>
    <property type="evidence" value="ECO:0007669"/>
    <property type="project" value="UniProtKB-KW"/>
</dbReference>
<dbReference type="GO" id="GO:0003677">
    <property type="term" value="F:DNA binding"/>
    <property type="evidence" value="ECO:0007669"/>
    <property type="project" value="UniProtKB-KW"/>
</dbReference>
<dbReference type="GO" id="GO:0003899">
    <property type="term" value="F:DNA-directed RNA polymerase activity"/>
    <property type="evidence" value="ECO:0007669"/>
    <property type="project" value="InterPro"/>
</dbReference>
<dbReference type="GO" id="GO:0008270">
    <property type="term" value="F:zinc ion binding"/>
    <property type="evidence" value="ECO:0007669"/>
    <property type="project" value="UniProtKB-UniRule"/>
</dbReference>
<dbReference type="GO" id="GO:0006269">
    <property type="term" value="P:DNA replication, synthesis of primer"/>
    <property type="evidence" value="ECO:0007669"/>
    <property type="project" value="UniProtKB-UniRule"/>
</dbReference>
<dbReference type="CDD" id="cd03364">
    <property type="entry name" value="TOPRIM_DnaG_primases"/>
    <property type="match status" value="1"/>
</dbReference>
<dbReference type="Gene3D" id="3.40.1360.10">
    <property type="match status" value="1"/>
</dbReference>
<dbReference type="Gene3D" id="3.90.980.10">
    <property type="entry name" value="DNA primase, catalytic core, N-terminal domain"/>
    <property type="match status" value="1"/>
</dbReference>
<dbReference type="Gene3D" id="3.90.580.10">
    <property type="entry name" value="Zinc finger, CHC2-type domain"/>
    <property type="match status" value="1"/>
</dbReference>
<dbReference type="HAMAP" id="MF_00974">
    <property type="entry name" value="DNA_primase_DnaG"/>
    <property type="match status" value="1"/>
</dbReference>
<dbReference type="InterPro" id="IPR037068">
    <property type="entry name" value="DNA_primase_core_N_sf"/>
</dbReference>
<dbReference type="InterPro" id="IPR006295">
    <property type="entry name" value="DNA_primase_DnaG"/>
</dbReference>
<dbReference type="InterPro" id="IPR036977">
    <property type="entry name" value="DNA_primase_Znf_CHC2"/>
</dbReference>
<dbReference type="InterPro" id="IPR030846">
    <property type="entry name" value="DnaG_bac"/>
</dbReference>
<dbReference type="InterPro" id="IPR013264">
    <property type="entry name" value="DNAG_N"/>
</dbReference>
<dbReference type="InterPro" id="IPR050219">
    <property type="entry name" value="DnaG_primase"/>
</dbReference>
<dbReference type="InterPro" id="IPR034151">
    <property type="entry name" value="TOPRIM_DnaG_bac"/>
</dbReference>
<dbReference type="InterPro" id="IPR006171">
    <property type="entry name" value="TOPRIM_dom"/>
</dbReference>
<dbReference type="InterPro" id="IPR002694">
    <property type="entry name" value="Znf_CHC2"/>
</dbReference>
<dbReference type="NCBIfam" id="TIGR01391">
    <property type="entry name" value="dnaG"/>
    <property type="match status" value="1"/>
</dbReference>
<dbReference type="PANTHER" id="PTHR30313">
    <property type="entry name" value="DNA PRIMASE"/>
    <property type="match status" value="1"/>
</dbReference>
<dbReference type="PANTHER" id="PTHR30313:SF2">
    <property type="entry name" value="DNA PRIMASE"/>
    <property type="match status" value="1"/>
</dbReference>
<dbReference type="Pfam" id="PF08275">
    <property type="entry name" value="DNAG_N"/>
    <property type="match status" value="1"/>
</dbReference>
<dbReference type="Pfam" id="PF13155">
    <property type="entry name" value="Toprim_2"/>
    <property type="match status" value="1"/>
</dbReference>
<dbReference type="Pfam" id="PF01807">
    <property type="entry name" value="Zn_ribbon_DnaG"/>
    <property type="match status" value="1"/>
</dbReference>
<dbReference type="SMART" id="SM00493">
    <property type="entry name" value="TOPRIM"/>
    <property type="match status" value="1"/>
</dbReference>
<dbReference type="SMART" id="SM00400">
    <property type="entry name" value="ZnF_CHCC"/>
    <property type="match status" value="1"/>
</dbReference>
<dbReference type="SUPFAM" id="SSF56731">
    <property type="entry name" value="DNA primase core"/>
    <property type="match status" value="1"/>
</dbReference>
<dbReference type="SUPFAM" id="SSF57783">
    <property type="entry name" value="Zinc beta-ribbon"/>
    <property type="match status" value="1"/>
</dbReference>
<dbReference type="PROSITE" id="PS50880">
    <property type="entry name" value="TOPRIM"/>
    <property type="match status" value="1"/>
</dbReference>
<organism>
    <name type="scientific">Mycoplasma pneumoniae (strain ATCC 29342 / M129 / Subtype 1)</name>
    <name type="common">Mycoplasmoides pneumoniae</name>
    <dbReference type="NCBI Taxonomy" id="272634"/>
    <lineage>
        <taxon>Bacteria</taxon>
        <taxon>Bacillati</taxon>
        <taxon>Mycoplasmatota</taxon>
        <taxon>Mycoplasmoidales</taxon>
        <taxon>Mycoplasmoidaceae</taxon>
        <taxon>Mycoplasmoides</taxon>
    </lineage>
</organism>
<gene>
    <name evidence="1" type="primary">dnaG</name>
    <name type="synonym">dnaE</name>
    <name type="ordered locus">MPN_353</name>
    <name type="ORF">MP483</name>
</gene>
<accession>P75426</accession>
<proteinExistence type="inferred from homology"/>
<reference key="1">
    <citation type="journal article" date="1996" name="Nucleic Acids Res.">
        <title>Complete sequence analysis of the genome of the bacterium Mycoplasma pneumoniae.</title>
        <authorList>
            <person name="Himmelreich R."/>
            <person name="Hilbert H."/>
            <person name="Plagens H."/>
            <person name="Pirkl E."/>
            <person name="Li B.-C."/>
            <person name="Herrmann R."/>
        </authorList>
    </citation>
    <scope>NUCLEOTIDE SEQUENCE [LARGE SCALE GENOMIC DNA]</scope>
    <source>
        <strain>ATCC 29342 / M129 / Subtype 1</strain>
    </source>
</reference>
<comment type="function">
    <text evidence="1">RNA polymerase that catalyzes the synthesis of short RNA molecules used as primers for DNA polymerase during DNA replication.</text>
</comment>
<comment type="catalytic activity">
    <reaction evidence="1">
        <text>ssDNA + n NTP = ssDNA/pppN(pN)n-1 hybrid + (n-1) diphosphate.</text>
        <dbReference type="EC" id="2.7.7.101"/>
    </reaction>
</comment>
<comment type="cofactor">
    <cofactor evidence="1">
        <name>Zn(2+)</name>
        <dbReference type="ChEBI" id="CHEBI:29105"/>
    </cofactor>
    <text evidence="1">Binds 1 zinc ion per monomer.</text>
</comment>
<comment type="cofactor">
    <cofactor evidence="1">
        <name>Mg(2+)</name>
        <dbReference type="ChEBI" id="CHEBI:18420"/>
    </cofactor>
    <text evidence="1">Binds two Mg(2+) per subunit.</text>
</comment>
<comment type="subunit">
    <text evidence="1">Monomer. Interacts with DnaB.</text>
</comment>
<comment type="domain">
    <text evidence="1">Contains an N-terminal zinc-binding domain, a central core domain that contains the primase activity, and a C-terminal DnaB-binding domain.</text>
</comment>
<comment type="similarity">
    <text evidence="1">Belongs to the DnaG primase family.</text>
</comment>
<protein>
    <recommendedName>
        <fullName evidence="1">DNA primase</fullName>
        <ecNumber evidence="1">2.7.7.101</ecNumber>
    </recommendedName>
</protein>